<dbReference type="EC" id="2.1.2.11" evidence="1"/>
<dbReference type="EMBL" id="AM933172">
    <property type="protein sequence ID" value="CAR31775.1"/>
    <property type="molecule type" value="Genomic_DNA"/>
</dbReference>
<dbReference type="RefSeq" id="WP_000805487.1">
    <property type="nucleotide sequence ID" value="NC_011294.1"/>
</dbReference>
<dbReference type="SMR" id="B5R3E6"/>
<dbReference type="KEGG" id="set:SEN0187"/>
<dbReference type="HOGENOM" id="CLU_036645_1_0_6"/>
<dbReference type="UniPathway" id="UPA00028">
    <property type="reaction ID" value="UER00003"/>
</dbReference>
<dbReference type="Proteomes" id="UP000000613">
    <property type="component" value="Chromosome"/>
</dbReference>
<dbReference type="GO" id="GO:0005737">
    <property type="term" value="C:cytoplasm"/>
    <property type="evidence" value="ECO:0007669"/>
    <property type="project" value="UniProtKB-SubCell"/>
</dbReference>
<dbReference type="GO" id="GO:0003864">
    <property type="term" value="F:3-methyl-2-oxobutanoate hydroxymethyltransferase activity"/>
    <property type="evidence" value="ECO:0007669"/>
    <property type="project" value="UniProtKB-UniRule"/>
</dbReference>
<dbReference type="GO" id="GO:0000287">
    <property type="term" value="F:magnesium ion binding"/>
    <property type="evidence" value="ECO:0007669"/>
    <property type="project" value="TreeGrafter"/>
</dbReference>
<dbReference type="GO" id="GO:0015940">
    <property type="term" value="P:pantothenate biosynthetic process"/>
    <property type="evidence" value="ECO:0007669"/>
    <property type="project" value="UniProtKB-UniRule"/>
</dbReference>
<dbReference type="CDD" id="cd06557">
    <property type="entry name" value="KPHMT-like"/>
    <property type="match status" value="1"/>
</dbReference>
<dbReference type="FunFam" id="3.20.20.60:FF:000003">
    <property type="entry name" value="3-methyl-2-oxobutanoate hydroxymethyltransferase"/>
    <property type="match status" value="1"/>
</dbReference>
<dbReference type="Gene3D" id="3.20.20.60">
    <property type="entry name" value="Phosphoenolpyruvate-binding domains"/>
    <property type="match status" value="1"/>
</dbReference>
<dbReference type="HAMAP" id="MF_00156">
    <property type="entry name" value="PanB"/>
    <property type="match status" value="1"/>
</dbReference>
<dbReference type="InterPro" id="IPR003700">
    <property type="entry name" value="Pantoate_hydroxy_MeTrfase"/>
</dbReference>
<dbReference type="InterPro" id="IPR015813">
    <property type="entry name" value="Pyrv/PenolPyrv_kinase-like_dom"/>
</dbReference>
<dbReference type="InterPro" id="IPR040442">
    <property type="entry name" value="Pyrv_kinase-like_dom_sf"/>
</dbReference>
<dbReference type="NCBIfam" id="TIGR00222">
    <property type="entry name" value="panB"/>
    <property type="match status" value="1"/>
</dbReference>
<dbReference type="NCBIfam" id="NF001452">
    <property type="entry name" value="PRK00311.1"/>
    <property type="match status" value="1"/>
</dbReference>
<dbReference type="PANTHER" id="PTHR20881">
    <property type="entry name" value="3-METHYL-2-OXOBUTANOATE HYDROXYMETHYLTRANSFERASE"/>
    <property type="match status" value="1"/>
</dbReference>
<dbReference type="PANTHER" id="PTHR20881:SF0">
    <property type="entry name" value="3-METHYL-2-OXOBUTANOATE HYDROXYMETHYLTRANSFERASE"/>
    <property type="match status" value="1"/>
</dbReference>
<dbReference type="Pfam" id="PF02548">
    <property type="entry name" value="Pantoate_transf"/>
    <property type="match status" value="1"/>
</dbReference>
<dbReference type="PIRSF" id="PIRSF000388">
    <property type="entry name" value="Pantoate_hydroxy_MeTrfase"/>
    <property type="match status" value="1"/>
</dbReference>
<dbReference type="SUPFAM" id="SSF51621">
    <property type="entry name" value="Phosphoenolpyruvate/pyruvate domain"/>
    <property type="match status" value="1"/>
</dbReference>
<gene>
    <name evidence="1" type="primary">panB</name>
    <name type="ordered locus">SEN0187</name>
</gene>
<keyword id="KW-0963">Cytoplasm</keyword>
<keyword id="KW-0460">Magnesium</keyword>
<keyword id="KW-0479">Metal-binding</keyword>
<keyword id="KW-0566">Pantothenate biosynthesis</keyword>
<keyword id="KW-0808">Transferase</keyword>
<sequence>MKPTTISLLQKCKQEKKRFATITAYDYSFAKLFADEGINVMLVGDSLGMTIQGHDSTLPVTVEDIAYHTRAVRRGAPNCLLLSDLPFMAYATPEQACENAAIVMRAGANMVKIEGGAWLVDTVKMLTERAVPVCGHLGLTPQSVNIFGGYKIQGRGDAGQVLLDDALALEAAGAQLLVLECVPVELAKRVTEALSIPVIGIGAGNVTDGQILVMHDAFGITGGHIPKFAKNFLAEAGDMRAAVQQYMAEVESGVYPGEEHSFH</sequence>
<accession>B5R3E6</accession>
<organism>
    <name type="scientific">Salmonella enteritidis PT4 (strain P125109)</name>
    <dbReference type="NCBI Taxonomy" id="550537"/>
    <lineage>
        <taxon>Bacteria</taxon>
        <taxon>Pseudomonadati</taxon>
        <taxon>Pseudomonadota</taxon>
        <taxon>Gammaproteobacteria</taxon>
        <taxon>Enterobacterales</taxon>
        <taxon>Enterobacteriaceae</taxon>
        <taxon>Salmonella</taxon>
    </lineage>
</organism>
<protein>
    <recommendedName>
        <fullName evidence="1">3-methyl-2-oxobutanoate hydroxymethyltransferase</fullName>
        <ecNumber evidence="1">2.1.2.11</ecNumber>
    </recommendedName>
    <alternativeName>
        <fullName evidence="1">Ketopantoate hydroxymethyltransferase</fullName>
        <shortName evidence="1">KPHMT</shortName>
    </alternativeName>
</protein>
<comment type="function">
    <text evidence="1">Catalyzes the reversible reaction in which hydroxymethyl group from 5,10-methylenetetrahydrofolate is transferred onto alpha-ketoisovalerate to form ketopantoate.</text>
</comment>
<comment type="catalytic activity">
    <reaction evidence="1">
        <text>3-methyl-2-oxobutanoate + (6R)-5,10-methylene-5,6,7,8-tetrahydrofolate + H2O = 2-dehydropantoate + (6S)-5,6,7,8-tetrahydrofolate</text>
        <dbReference type="Rhea" id="RHEA:11824"/>
        <dbReference type="ChEBI" id="CHEBI:11561"/>
        <dbReference type="ChEBI" id="CHEBI:11851"/>
        <dbReference type="ChEBI" id="CHEBI:15377"/>
        <dbReference type="ChEBI" id="CHEBI:15636"/>
        <dbReference type="ChEBI" id="CHEBI:57453"/>
        <dbReference type="EC" id="2.1.2.11"/>
    </reaction>
</comment>
<comment type="cofactor">
    <cofactor evidence="1">
        <name>Mg(2+)</name>
        <dbReference type="ChEBI" id="CHEBI:18420"/>
    </cofactor>
    <text evidence="1">Binds 1 Mg(2+) ion per subunit.</text>
</comment>
<comment type="pathway">
    <text evidence="1">Cofactor biosynthesis; (R)-pantothenate biosynthesis; (R)-pantoate from 3-methyl-2-oxobutanoate: step 1/2.</text>
</comment>
<comment type="subunit">
    <text evidence="1">Homodecamer; pentamer of dimers.</text>
</comment>
<comment type="subcellular location">
    <subcellularLocation>
        <location evidence="1">Cytoplasm</location>
    </subcellularLocation>
</comment>
<comment type="similarity">
    <text evidence="1">Belongs to the PanB family.</text>
</comment>
<reference key="1">
    <citation type="journal article" date="2008" name="Genome Res.">
        <title>Comparative genome analysis of Salmonella enteritidis PT4 and Salmonella gallinarum 287/91 provides insights into evolutionary and host adaptation pathways.</title>
        <authorList>
            <person name="Thomson N.R."/>
            <person name="Clayton D.J."/>
            <person name="Windhorst D."/>
            <person name="Vernikos G."/>
            <person name="Davidson S."/>
            <person name="Churcher C."/>
            <person name="Quail M.A."/>
            <person name="Stevens M."/>
            <person name="Jones M.A."/>
            <person name="Watson M."/>
            <person name="Barron A."/>
            <person name="Layton A."/>
            <person name="Pickard D."/>
            <person name="Kingsley R.A."/>
            <person name="Bignell A."/>
            <person name="Clark L."/>
            <person name="Harris B."/>
            <person name="Ormond D."/>
            <person name="Abdellah Z."/>
            <person name="Brooks K."/>
            <person name="Cherevach I."/>
            <person name="Chillingworth T."/>
            <person name="Woodward J."/>
            <person name="Norberczak H."/>
            <person name="Lord A."/>
            <person name="Arrowsmith C."/>
            <person name="Jagels K."/>
            <person name="Moule S."/>
            <person name="Mungall K."/>
            <person name="Saunders M."/>
            <person name="Whitehead S."/>
            <person name="Chabalgoity J.A."/>
            <person name="Maskell D."/>
            <person name="Humphreys T."/>
            <person name="Roberts M."/>
            <person name="Barrow P.A."/>
            <person name="Dougan G."/>
            <person name="Parkhill J."/>
        </authorList>
    </citation>
    <scope>NUCLEOTIDE SEQUENCE [LARGE SCALE GENOMIC DNA]</scope>
    <source>
        <strain>P125109</strain>
    </source>
</reference>
<feature type="chain" id="PRO_1000097002" description="3-methyl-2-oxobutanoate hydroxymethyltransferase">
    <location>
        <begin position="1"/>
        <end position="263"/>
    </location>
</feature>
<feature type="active site" description="Proton acceptor" evidence="1">
    <location>
        <position position="180"/>
    </location>
</feature>
<feature type="binding site" evidence="1">
    <location>
        <begin position="45"/>
        <end position="46"/>
    </location>
    <ligand>
        <name>3-methyl-2-oxobutanoate</name>
        <dbReference type="ChEBI" id="CHEBI:11851"/>
    </ligand>
</feature>
<feature type="binding site" evidence="1">
    <location>
        <position position="45"/>
    </location>
    <ligand>
        <name>Mg(2+)</name>
        <dbReference type="ChEBI" id="CHEBI:18420"/>
    </ligand>
</feature>
<feature type="binding site" evidence="1">
    <location>
        <position position="84"/>
    </location>
    <ligand>
        <name>3-methyl-2-oxobutanoate</name>
        <dbReference type="ChEBI" id="CHEBI:11851"/>
    </ligand>
</feature>
<feature type="binding site" evidence="1">
    <location>
        <position position="84"/>
    </location>
    <ligand>
        <name>Mg(2+)</name>
        <dbReference type="ChEBI" id="CHEBI:18420"/>
    </ligand>
</feature>
<feature type="binding site" evidence="1">
    <location>
        <position position="112"/>
    </location>
    <ligand>
        <name>3-methyl-2-oxobutanoate</name>
        <dbReference type="ChEBI" id="CHEBI:11851"/>
    </ligand>
</feature>
<feature type="binding site" evidence="1">
    <location>
        <position position="114"/>
    </location>
    <ligand>
        <name>Mg(2+)</name>
        <dbReference type="ChEBI" id="CHEBI:18420"/>
    </ligand>
</feature>
<proteinExistence type="inferred from homology"/>
<name>PANB_SALEP</name>
<evidence type="ECO:0000255" key="1">
    <source>
        <dbReference type="HAMAP-Rule" id="MF_00156"/>
    </source>
</evidence>